<reference key="1">
    <citation type="journal article" date="1999" name="Nat. Genet.">
        <title>Comparative genomes of Chlamydia pneumoniae and C. trachomatis.</title>
        <authorList>
            <person name="Kalman S."/>
            <person name="Mitchell W.P."/>
            <person name="Marathe R."/>
            <person name="Lammel C.J."/>
            <person name="Fan J."/>
            <person name="Hyman R.W."/>
            <person name="Olinger L."/>
            <person name="Grimwood J."/>
            <person name="Davis R.W."/>
            <person name="Stephens R.S."/>
        </authorList>
    </citation>
    <scope>NUCLEOTIDE SEQUENCE [LARGE SCALE GENOMIC DNA]</scope>
    <source>
        <strain>CWL029</strain>
    </source>
</reference>
<reference key="2">
    <citation type="journal article" date="2000" name="Nucleic Acids Res.">
        <title>Genome sequences of Chlamydia trachomatis MoPn and Chlamydia pneumoniae AR39.</title>
        <authorList>
            <person name="Read T.D."/>
            <person name="Brunham R.C."/>
            <person name="Shen C."/>
            <person name="Gill S.R."/>
            <person name="Heidelberg J.F."/>
            <person name="White O."/>
            <person name="Hickey E.K."/>
            <person name="Peterson J.D."/>
            <person name="Utterback T.R."/>
            <person name="Berry K.J."/>
            <person name="Bass S."/>
            <person name="Linher K.D."/>
            <person name="Weidman J.F."/>
            <person name="Khouri H.M."/>
            <person name="Craven B."/>
            <person name="Bowman C."/>
            <person name="Dodson R.J."/>
            <person name="Gwinn M.L."/>
            <person name="Nelson W.C."/>
            <person name="DeBoy R.T."/>
            <person name="Kolonay J.F."/>
            <person name="McClarty G."/>
            <person name="Salzberg S.L."/>
            <person name="Eisen J.A."/>
            <person name="Fraser C.M."/>
        </authorList>
    </citation>
    <scope>NUCLEOTIDE SEQUENCE [LARGE SCALE GENOMIC DNA]</scope>
    <source>
        <strain>AR39</strain>
    </source>
</reference>
<reference key="3">
    <citation type="journal article" date="2000" name="Nucleic Acids Res.">
        <title>Comparison of whole genome sequences of Chlamydia pneumoniae J138 from Japan and CWL029 from USA.</title>
        <authorList>
            <person name="Shirai M."/>
            <person name="Hirakawa H."/>
            <person name="Kimoto M."/>
            <person name="Tabuchi M."/>
            <person name="Kishi F."/>
            <person name="Ouchi K."/>
            <person name="Shiba T."/>
            <person name="Ishii K."/>
            <person name="Hattori M."/>
            <person name="Kuhara S."/>
            <person name="Nakazawa T."/>
        </authorList>
    </citation>
    <scope>NUCLEOTIDE SEQUENCE [LARGE SCALE GENOMIC DNA]</scope>
    <source>
        <strain>J138</strain>
    </source>
</reference>
<reference key="4">
    <citation type="submission" date="2002-05" db="EMBL/GenBank/DDBJ databases">
        <title>The genome sequence of Chlamydia pneumoniae TW183 and comparison with other Chlamydia strains based on whole genome sequence analysis.</title>
        <authorList>
            <person name="Geng M.M."/>
            <person name="Schuhmacher A."/>
            <person name="Muehldorfer I."/>
            <person name="Bensch K.W."/>
            <person name="Schaefer K.P."/>
            <person name="Schneider S."/>
            <person name="Pohl T."/>
            <person name="Essig A."/>
            <person name="Marre R."/>
            <person name="Melchers K."/>
        </authorList>
    </citation>
    <scope>NUCLEOTIDE SEQUENCE [LARGE SCALE GENOMIC DNA]</scope>
    <source>
        <strain>TW-183</strain>
    </source>
</reference>
<dbReference type="EMBL" id="AE001363">
    <property type="protein sequence ID" value="AAD18184.1"/>
    <property type="molecule type" value="Genomic_DNA"/>
</dbReference>
<dbReference type="EMBL" id="AE002161">
    <property type="protein sequence ID" value="AAF38550.1"/>
    <property type="molecule type" value="Genomic_DNA"/>
</dbReference>
<dbReference type="EMBL" id="BA000008">
    <property type="protein sequence ID" value="BAA98243.1"/>
    <property type="molecule type" value="Genomic_DNA"/>
</dbReference>
<dbReference type="EMBL" id="AE009440">
    <property type="protein sequence ID" value="AAP97968.1"/>
    <property type="molecule type" value="Genomic_DNA"/>
</dbReference>
<dbReference type="PIR" id="A86495">
    <property type="entry name" value="A86495"/>
</dbReference>
<dbReference type="PIR" id="F72128">
    <property type="entry name" value="F72128"/>
</dbReference>
<dbReference type="RefSeq" id="NP_224239.1">
    <property type="nucleotide sequence ID" value="NC_000922.1"/>
</dbReference>
<dbReference type="RefSeq" id="WP_010882681.1">
    <property type="nucleotide sequence ID" value="NZ_LN847257.1"/>
</dbReference>
<dbReference type="SMR" id="Q9Z9F0"/>
<dbReference type="STRING" id="406984.CPK_ORF00534"/>
<dbReference type="GeneID" id="81478358"/>
<dbReference type="KEGG" id="cpa:CP_0745"/>
<dbReference type="KEGG" id="cpj:rs21"/>
<dbReference type="KEGG" id="cpn:CPn_0031"/>
<dbReference type="KEGG" id="cpt:CpB0035"/>
<dbReference type="PATRIC" id="fig|115713.3.peg.38"/>
<dbReference type="eggNOG" id="COG0828">
    <property type="taxonomic scope" value="Bacteria"/>
</dbReference>
<dbReference type="HOGENOM" id="CLU_159258_2_3_0"/>
<dbReference type="OMA" id="HQHFEKP"/>
<dbReference type="OrthoDB" id="9799244at2"/>
<dbReference type="Proteomes" id="UP000000583">
    <property type="component" value="Chromosome"/>
</dbReference>
<dbReference type="Proteomes" id="UP000000801">
    <property type="component" value="Chromosome"/>
</dbReference>
<dbReference type="GO" id="GO:1990904">
    <property type="term" value="C:ribonucleoprotein complex"/>
    <property type="evidence" value="ECO:0007669"/>
    <property type="project" value="UniProtKB-KW"/>
</dbReference>
<dbReference type="GO" id="GO:0005840">
    <property type="term" value="C:ribosome"/>
    <property type="evidence" value="ECO:0007669"/>
    <property type="project" value="UniProtKB-KW"/>
</dbReference>
<dbReference type="GO" id="GO:0003735">
    <property type="term" value="F:structural constituent of ribosome"/>
    <property type="evidence" value="ECO:0007669"/>
    <property type="project" value="InterPro"/>
</dbReference>
<dbReference type="GO" id="GO:0006412">
    <property type="term" value="P:translation"/>
    <property type="evidence" value="ECO:0007669"/>
    <property type="project" value="UniProtKB-UniRule"/>
</dbReference>
<dbReference type="Gene3D" id="1.20.5.1150">
    <property type="entry name" value="Ribosomal protein S8"/>
    <property type="match status" value="1"/>
</dbReference>
<dbReference type="HAMAP" id="MF_00358">
    <property type="entry name" value="Ribosomal_bS21"/>
    <property type="match status" value="1"/>
</dbReference>
<dbReference type="InterPro" id="IPR001911">
    <property type="entry name" value="Ribosomal_bS21"/>
</dbReference>
<dbReference type="InterPro" id="IPR038380">
    <property type="entry name" value="Ribosomal_bS21_sf"/>
</dbReference>
<dbReference type="NCBIfam" id="TIGR00030">
    <property type="entry name" value="S21p"/>
    <property type="match status" value="1"/>
</dbReference>
<dbReference type="Pfam" id="PF01165">
    <property type="entry name" value="Ribosomal_S21"/>
    <property type="match status" value="1"/>
</dbReference>
<dbReference type="PRINTS" id="PR00976">
    <property type="entry name" value="RIBOSOMALS21"/>
</dbReference>
<keyword id="KW-0687">Ribonucleoprotein</keyword>
<keyword id="KW-0689">Ribosomal protein</keyword>
<sequence>MPSVKVRVGEPVDRALRILKKKIDKEGILKAAKSHRFYDKPSVKKRAKSKAAAKYRSR</sequence>
<comment type="similarity">
    <text evidence="2">Belongs to the bacterial ribosomal protein bS21 family.</text>
</comment>
<gene>
    <name type="primary">rpsU</name>
    <name type="synonym">rs21</name>
    <name type="ordered locus">CPn_0031</name>
    <name type="ordered locus">CP_0745</name>
    <name type="ordered locus">CpB0035</name>
</gene>
<proteinExistence type="inferred from homology"/>
<protein>
    <recommendedName>
        <fullName evidence="2">Small ribosomal subunit protein bS21</fullName>
    </recommendedName>
    <alternativeName>
        <fullName>30S ribosomal protein S21</fullName>
    </alternativeName>
</protein>
<accession>Q9Z9F0</accession>
<accession>Q9JQK5</accession>
<name>RS21_CHLPN</name>
<evidence type="ECO:0000256" key="1">
    <source>
        <dbReference type="SAM" id="MobiDB-lite"/>
    </source>
</evidence>
<evidence type="ECO:0000305" key="2"/>
<feature type="chain" id="PRO_0000178323" description="Small ribosomal subunit protein bS21">
    <location>
        <begin position="1"/>
        <end position="58"/>
    </location>
</feature>
<feature type="region of interest" description="Disordered" evidence="1">
    <location>
        <begin position="39"/>
        <end position="58"/>
    </location>
</feature>
<feature type="compositionally biased region" description="Basic residues" evidence="1">
    <location>
        <begin position="43"/>
        <end position="58"/>
    </location>
</feature>
<organism>
    <name type="scientific">Chlamydia pneumoniae</name>
    <name type="common">Chlamydophila pneumoniae</name>
    <dbReference type="NCBI Taxonomy" id="83558"/>
    <lineage>
        <taxon>Bacteria</taxon>
        <taxon>Pseudomonadati</taxon>
        <taxon>Chlamydiota</taxon>
        <taxon>Chlamydiia</taxon>
        <taxon>Chlamydiales</taxon>
        <taxon>Chlamydiaceae</taxon>
        <taxon>Chlamydia/Chlamydophila group</taxon>
        <taxon>Chlamydia</taxon>
    </lineage>
</organism>